<comment type="function">
    <text>Involved in oxygen transport from the lung to the various peripheral tissues.</text>
</comment>
<comment type="subunit">
    <text>Heterotetramer of two alpha chains and two beta chains.</text>
</comment>
<comment type="tissue specificity">
    <text>Red blood cells.</text>
</comment>
<comment type="polymorphism">
    <text evidence="4">There are two alleles. The sequence shown is that of alpha-I.</text>
</comment>
<comment type="similarity">
    <text evidence="3">Belongs to the globin family.</text>
</comment>
<organism>
    <name type="scientific">Mandrillus sphinx</name>
    <name type="common">Mandrill</name>
    <name type="synonym">Papio sphinx</name>
    <dbReference type="NCBI Taxonomy" id="9561"/>
    <lineage>
        <taxon>Eukaryota</taxon>
        <taxon>Metazoa</taxon>
        <taxon>Chordata</taxon>
        <taxon>Craniata</taxon>
        <taxon>Vertebrata</taxon>
        <taxon>Euteleostomi</taxon>
        <taxon>Mammalia</taxon>
        <taxon>Eutheria</taxon>
        <taxon>Euarchontoglires</taxon>
        <taxon>Primates</taxon>
        <taxon>Haplorrhini</taxon>
        <taxon>Catarrhini</taxon>
        <taxon>Cercopithecidae</taxon>
        <taxon>Cercopithecinae</taxon>
        <taxon>Mandrillus</taxon>
    </lineage>
</organism>
<proteinExistence type="evidence at protein level"/>
<accession>P08258</accession>
<name>HBA_MANSP</name>
<evidence type="ECO:0000250" key="1">
    <source>
        <dbReference type="UniProtKB" id="P01942"/>
    </source>
</evidence>
<evidence type="ECO:0000250" key="2">
    <source>
        <dbReference type="UniProtKB" id="P69905"/>
    </source>
</evidence>
<evidence type="ECO:0000255" key="3">
    <source>
        <dbReference type="PROSITE-ProRule" id="PRU00238"/>
    </source>
</evidence>
<evidence type="ECO:0000269" key="4">
    <source>
    </source>
</evidence>
<protein>
    <recommendedName>
        <fullName>Hemoglobin subunit alpha-1/2</fullName>
    </recommendedName>
    <alternativeName>
        <fullName>Alpha-1/2-globin</fullName>
    </alternativeName>
    <alternativeName>
        <fullName>Hemoglobin alpha-1/2 chain</fullName>
    </alternativeName>
    <alternativeName>
        <fullName>Hemoglobin alpha-I/II chain</fullName>
    </alternativeName>
</protein>
<sequence>VLSPADKKNVKAAWDKVGGHAGEYGAEALERMFLSFPTTKTYFPHFNLSHGSDQVKGHGKKVADALTLAVGHVDDMPQALSKLSDLHAHKLRVDPVNFKLLSHCLLVTLAAHLPAEFTPAVHASLDKFLASVSTVLTSKYR</sequence>
<dbReference type="PIR" id="S00526">
    <property type="entry name" value="HABAIM"/>
</dbReference>
<dbReference type="SMR" id="P08258"/>
<dbReference type="GO" id="GO:0072562">
    <property type="term" value="C:blood microparticle"/>
    <property type="evidence" value="ECO:0007669"/>
    <property type="project" value="TreeGrafter"/>
</dbReference>
<dbReference type="GO" id="GO:0031838">
    <property type="term" value="C:haptoglobin-hemoglobin complex"/>
    <property type="evidence" value="ECO:0007669"/>
    <property type="project" value="TreeGrafter"/>
</dbReference>
<dbReference type="GO" id="GO:0005833">
    <property type="term" value="C:hemoglobin complex"/>
    <property type="evidence" value="ECO:0007669"/>
    <property type="project" value="InterPro"/>
</dbReference>
<dbReference type="GO" id="GO:0031720">
    <property type="term" value="F:haptoglobin binding"/>
    <property type="evidence" value="ECO:0007669"/>
    <property type="project" value="TreeGrafter"/>
</dbReference>
<dbReference type="GO" id="GO:0020037">
    <property type="term" value="F:heme binding"/>
    <property type="evidence" value="ECO:0007669"/>
    <property type="project" value="InterPro"/>
</dbReference>
<dbReference type="GO" id="GO:0005506">
    <property type="term" value="F:iron ion binding"/>
    <property type="evidence" value="ECO:0007669"/>
    <property type="project" value="InterPro"/>
</dbReference>
<dbReference type="GO" id="GO:0043177">
    <property type="term" value="F:organic acid binding"/>
    <property type="evidence" value="ECO:0007669"/>
    <property type="project" value="TreeGrafter"/>
</dbReference>
<dbReference type="GO" id="GO:0019825">
    <property type="term" value="F:oxygen binding"/>
    <property type="evidence" value="ECO:0007669"/>
    <property type="project" value="InterPro"/>
</dbReference>
<dbReference type="GO" id="GO:0005344">
    <property type="term" value="F:oxygen carrier activity"/>
    <property type="evidence" value="ECO:0007669"/>
    <property type="project" value="UniProtKB-KW"/>
</dbReference>
<dbReference type="GO" id="GO:0004601">
    <property type="term" value="F:peroxidase activity"/>
    <property type="evidence" value="ECO:0007669"/>
    <property type="project" value="TreeGrafter"/>
</dbReference>
<dbReference type="GO" id="GO:0042744">
    <property type="term" value="P:hydrogen peroxide catabolic process"/>
    <property type="evidence" value="ECO:0007669"/>
    <property type="project" value="TreeGrafter"/>
</dbReference>
<dbReference type="CDD" id="cd08927">
    <property type="entry name" value="Hb-alpha-like"/>
    <property type="match status" value="1"/>
</dbReference>
<dbReference type="FunFam" id="1.10.490.10:FF:000002">
    <property type="entry name" value="Hemoglobin subunit alpha"/>
    <property type="match status" value="1"/>
</dbReference>
<dbReference type="Gene3D" id="1.10.490.10">
    <property type="entry name" value="Globins"/>
    <property type="match status" value="1"/>
</dbReference>
<dbReference type="InterPro" id="IPR000971">
    <property type="entry name" value="Globin"/>
</dbReference>
<dbReference type="InterPro" id="IPR009050">
    <property type="entry name" value="Globin-like_sf"/>
</dbReference>
<dbReference type="InterPro" id="IPR012292">
    <property type="entry name" value="Globin/Proto"/>
</dbReference>
<dbReference type="InterPro" id="IPR002338">
    <property type="entry name" value="Hemoglobin_a-typ"/>
</dbReference>
<dbReference type="InterPro" id="IPR050056">
    <property type="entry name" value="Hemoglobin_oxygen_transport"/>
</dbReference>
<dbReference type="InterPro" id="IPR002339">
    <property type="entry name" value="Hemoglobin_pi"/>
</dbReference>
<dbReference type="PANTHER" id="PTHR11442">
    <property type="entry name" value="HEMOGLOBIN FAMILY MEMBER"/>
    <property type="match status" value="1"/>
</dbReference>
<dbReference type="PANTHER" id="PTHR11442:SF48">
    <property type="entry name" value="HEMOGLOBIN SUBUNIT ALPHA"/>
    <property type="match status" value="1"/>
</dbReference>
<dbReference type="Pfam" id="PF00042">
    <property type="entry name" value="Globin"/>
    <property type="match status" value="1"/>
</dbReference>
<dbReference type="PRINTS" id="PR00612">
    <property type="entry name" value="ALPHAHAEM"/>
</dbReference>
<dbReference type="PRINTS" id="PR00815">
    <property type="entry name" value="PIHAEM"/>
</dbReference>
<dbReference type="SUPFAM" id="SSF46458">
    <property type="entry name" value="Globin-like"/>
    <property type="match status" value="1"/>
</dbReference>
<dbReference type="PROSITE" id="PS01033">
    <property type="entry name" value="GLOBIN"/>
    <property type="match status" value="1"/>
</dbReference>
<feature type="chain" id="PRO_0000052684" description="Hemoglobin subunit alpha-1/2">
    <location>
        <begin position="1"/>
        <end position="141"/>
    </location>
</feature>
<feature type="domain" description="Globin" evidence="3">
    <location>
        <begin position="1"/>
        <end position="141"/>
    </location>
</feature>
<feature type="binding site" evidence="3">
    <location>
        <position position="58"/>
    </location>
    <ligand>
        <name>O2</name>
        <dbReference type="ChEBI" id="CHEBI:15379"/>
    </ligand>
</feature>
<feature type="binding site" description="proximal binding residue" evidence="3">
    <location>
        <position position="87"/>
    </location>
    <ligand>
        <name>heme b</name>
        <dbReference type="ChEBI" id="CHEBI:60344"/>
    </ligand>
    <ligandPart>
        <name>Fe</name>
        <dbReference type="ChEBI" id="CHEBI:18248"/>
    </ligandPart>
</feature>
<feature type="modified residue" description="Phosphoserine" evidence="2">
    <location>
        <position position="3"/>
    </location>
</feature>
<feature type="modified residue" description="N6-succinyllysine" evidence="1">
    <location>
        <position position="7"/>
    </location>
</feature>
<feature type="modified residue" description="N6-succinyllysine" evidence="1">
    <location>
        <position position="11"/>
    </location>
</feature>
<feature type="modified residue" description="N6-acetyllysine; alternate" evidence="2">
    <location>
        <position position="16"/>
    </location>
</feature>
<feature type="modified residue" description="N6-succinyllysine; alternate" evidence="1">
    <location>
        <position position="16"/>
    </location>
</feature>
<feature type="modified residue" description="Phosphotyrosine" evidence="2">
    <location>
        <position position="24"/>
    </location>
</feature>
<feature type="modified residue" description="Phosphoserine" evidence="2">
    <location>
        <position position="35"/>
    </location>
</feature>
<feature type="modified residue" description="N6-succinyllysine" evidence="1">
    <location>
        <position position="40"/>
    </location>
</feature>
<feature type="modified residue" description="Phosphoserine" evidence="2">
    <location>
        <position position="49"/>
    </location>
</feature>
<feature type="modified residue" description="Phosphoserine" evidence="1">
    <location>
        <position position="102"/>
    </location>
</feature>
<feature type="modified residue" description="Phosphothreonine" evidence="1">
    <location>
        <position position="108"/>
    </location>
</feature>
<feature type="modified residue" description="Phosphoserine" evidence="1">
    <location>
        <position position="124"/>
    </location>
</feature>
<feature type="modified residue" description="Phosphoserine" evidence="1">
    <location>
        <position position="131"/>
    </location>
</feature>
<feature type="modified residue" description="Phosphothreonine" evidence="1">
    <location>
        <position position="134"/>
    </location>
</feature>
<feature type="modified residue" description="Phosphothreonine" evidence="1">
    <location>
        <position position="137"/>
    </location>
</feature>
<feature type="modified residue" description="Phosphoserine" evidence="1">
    <location>
        <position position="138"/>
    </location>
</feature>
<feature type="sequence variant" description="In alpha-2." evidence="4">
    <original>A</original>
    <variation>D</variation>
    <location>
        <position position="5"/>
    </location>
</feature>
<feature type="sequence variant" description="In alpha-2." evidence="4">
    <original>N</original>
    <variation>H</variation>
    <location>
        <position position="9"/>
    </location>
</feature>
<reference key="1">
    <citation type="journal article" date="1988" name="Biol. Chem. Hoppe-Seyler">
        <title>The primary structure of the mandrill (Mandrillus sphinx, Primates) hemoglobin.</title>
        <authorList>
            <person name="Lin H.-X."/>
            <person name="Kleinschmidt T."/>
            <person name="Braunitzer G."/>
            <person name="Goltenboth R."/>
        </authorList>
    </citation>
    <scope>PROTEIN SEQUENCE</scope>
</reference>
<keyword id="KW-0007">Acetylation</keyword>
<keyword id="KW-0903">Direct protein sequencing</keyword>
<keyword id="KW-0349">Heme</keyword>
<keyword id="KW-0408">Iron</keyword>
<keyword id="KW-0479">Metal-binding</keyword>
<keyword id="KW-0561">Oxygen transport</keyword>
<keyword id="KW-0597">Phosphoprotein</keyword>
<keyword id="KW-0813">Transport</keyword>